<reference key="1">
    <citation type="journal article" date="2000" name="Cell Res.">
        <title>Molecular characters and morphological genetics of CAL gene in Chinese cabbage.</title>
        <authorList>
            <person name="Li X.F."/>
            <person name="Shen R.J."/>
            <person name="Liu P.L."/>
            <person name="Tang Z.C."/>
            <person name="He Y.K."/>
        </authorList>
    </citation>
    <scope>NUCLEOTIDE SEQUENCE [MRNA]</scope>
    <scope>FUNCTION</scope>
    <source>
        <strain>cv. TT505</strain>
        <tissue>Leaf</tissue>
    </source>
</reference>
<reference key="2">
    <citation type="journal article" date="2000" name="Genetics">
        <title>Variation and selection at the CAULIFLOWER floral homeotic gene accompanying the evolution of domesticated Brassica oleracea.</title>
        <authorList>
            <person name="Purugganan M.D."/>
            <person name="Boyles A.L."/>
            <person name="Suddith J.I."/>
        </authorList>
    </citation>
    <scope>REVIEW</scope>
    <scope>GENE FAMILY</scope>
</reference>
<comment type="function">
    <text evidence="5">Probable transcription factor that promotes early floral meristem identity in synergy with APETALA1, FRUITFULL and LEAFY. Is required subsequently for the transition of an inflorescence meristem into a floral meristem. Seems to be partially redundant to the function of APETALA1.</text>
</comment>
<comment type="subunit">
    <text evidence="1">Homodimer capable of binding to CArG-box sequences.</text>
</comment>
<comment type="subcellular location">
    <subcellularLocation>
        <location evidence="2">Nucleus</location>
    </subcellularLocation>
</comment>
<comment type="miscellaneous">
    <text>CAULIFLOWER may contribute to the shape of the floral meristem. This trait has likely been selected by early farmers during the domestication of modified inflorescence structures.</text>
</comment>
<protein>
    <recommendedName>
        <fullName>Transcription factor CAULIFLOWER</fullName>
        <shortName>BcpCAL</shortName>
    </recommendedName>
    <alternativeName>
        <fullName>Agamous-like MADS-box protein CAL</fullName>
    </alternativeName>
</protein>
<dbReference type="EMBL" id="AJ251300">
    <property type="protein sequence ID" value="CAB61825.1"/>
    <property type="molecule type" value="mRNA"/>
</dbReference>
<dbReference type="SMR" id="Q9SBK9"/>
<dbReference type="FunCoup" id="Q9SBK9">
    <property type="interactions" value="40"/>
</dbReference>
<dbReference type="STRING" id="51351.Q9SBK9"/>
<dbReference type="eggNOG" id="KOG0014">
    <property type="taxonomic scope" value="Eukaryota"/>
</dbReference>
<dbReference type="InParanoid" id="Q9SBK9"/>
<dbReference type="GO" id="GO:0005634">
    <property type="term" value="C:nucleus"/>
    <property type="evidence" value="ECO:0007669"/>
    <property type="project" value="UniProtKB-SubCell"/>
</dbReference>
<dbReference type="GO" id="GO:0003700">
    <property type="term" value="F:DNA-binding transcription factor activity"/>
    <property type="evidence" value="ECO:0007669"/>
    <property type="project" value="InterPro"/>
</dbReference>
<dbReference type="GO" id="GO:0046983">
    <property type="term" value="F:protein dimerization activity"/>
    <property type="evidence" value="ECO:0007669"/>
    <property type="project" value="InterPro"/>
</dbReference>
<dbReference type="GO" id="GO:0000977">
    <property type="term" value="F:RNA polymerase II transcription regulatory region sequence-specific DNA binding"/>
    <property type="evidence" value="ECO:0007669"/>
    <property type="project" value="InterPro"/>
</dbReference>
<dbReference type="GO" id="GO:0030154">
    <property type="term" value="P:cell differentiation"/>
    <property type="evidence" value="ECO:0007669"/>
    <property type="project" value="UniProtKB-KW"/>
</dbReference>
<dbReference type="GO" id="GO:0009908">
    <property type="term" value="P:flower development"/>
    <property type="evidence" value="ECO:0007669"/>
    <property type="project" value="UniProtKB-KW"/>
</dbReference>
<dbReference type="GO" id="GO:0045944">
    <property type="term" value="P:positive regulation of transcription by RNA polymerase II"/>
    <property type="evidence" value="ECO:0007669"/>
    <property type="project" value="InterPro"/>
</dbReference>
<dbReference type="CDD" id="cd00265">
    <property type="entry name" value="MADS_MEF2_like"/>
    <property type="match status" value="1"/>
</dbReference>
<dbReference type="FunFam" id="3.40.1810.10:FF:000003">
    <property type="entry name" value="MADS-box transcription factor MADS-MC"/>
    <property type="match status" value="1"/>
</dbReference>
<dbReference type="Gene3D" id="3.40.1810.10">
    <property type="entry name" value="Transcription factor, MADS-box"/>
    <property type="match status" value="1"/>
</dbReference>
<dbReference type="InterPro" id="IPR050142">
    <property type="entry name" value="MADS-box/MEF2_TF"/>
</dbReference>
<dbReference type="InterPro" id="IPR033896">
    <property type="entry name" value="MEF2-like_N"/>
</dbReference>
<dbReference type="InterPro" id="IPR002487">
    <property type="entry name" value="TF_Kbox"/>
</dbReference>
<dbReference type="InterPro" id="IPR002100">
    <property type="entry name" value="TF_MADSbox"/>
</dbReference>
<dbReference type="InterPro" id="IPR036879">
    <property type="entry name" value="TF_MADSbox_sf"/>
</dbReference>
<dbReference type="PANTHER" id="PTHR48019">
    <property type="entry name" value="SERUM RESPONSE FACTOR HOMOLOG"/>
    <property type="match status" value="1"/>
</dbReference>
<dbReference type="Pfam" id="PF01486">
    <property type="entry name" value="K-box"/>
    <property type="match status" value="1"/>
</dbReference>
<dbReference type="Pfam" id="PF00319">
    <property type="entry name" value="SRF-TF"/>
    <property type="match status" value="1"/>
</dbReference>
<dbReference type="PRINTS" id="PR00404">
    <property type="entry name" value="MADSDOMAIN"/>
</dbReference>
<dbReference type="SMART" id="SM00432">
    <property type="entry name" value="MADS"/>
    <property type="match status" value="1"/>
</dbReference>
<dbReference type="SUPFAM" id="SSF55455">
    <property type="entry name" value="SRF-like"/>
    <property type="match status" value="1"/>
</dbReference>
<dbReference type="PROSITE" id="PS51297">
    <property type="entry name" value="K_BOX"/>
    <property type="match status" value="1"/>
</dbReference>
<dbReference type="PROSITE" id="PS00350">
    <property type="entry name" value="MADS_BOX_1"/>
    <property type="match status" value="1"/>
</dbReference>
<dbReference type="PROSITE" id="PS50066">
    <property type="entry name" value="MADS_BOX_2"/>
    <property type="match status" value="1"/>
</dbReference>
<gene>
    <name type="primary">CAL</name>
</gene>
<keyword id="KW-0010">Activator</keyword>
<keyword id="KW-0175">Coiled coil</keyword>
<keyword id="KW-0217">Developmental protein</keyword>
<keyword id="KW-0221">Differentiation</keyword>
<keyword id="KW-0238">DNA-binding</keyword>
<keyword id="KW-0287">Flowering</keyword>
<keyword id="KW-0539">Nucleus</keyword>
<keyword id="KW-0804">Transcription</keyword>
<keyword id="KW-0805">Transcription regulation</keyword>
<feature type="chain" id="PRO_0000417147" description="Transcription factor CAULIFLOWER">
    <location>
        <begin position="1"/>
        <end position="254"/>
    </location>
</feature>
<feature type="domain" description="MADS-box" evidence="2">
    <location>
        <begin position="1"/>
        <end position="61"/>
    </location>
</feature>
<feature type="domain" description="K-box" evidence="3">
    <location>
        <begin position="90"/>
        <end position="180"/>
    </location>
</feature>
<feature type="region of interest" description="Disordered" evidence="4">
    <location>
        <begin position="182"/>
        <end position="205"/>
    </location>
</feature>
<feature type="compositionally biased region" description="Polar residues" evidence="4">
    <location>
        <begin position="182"/>
        <end position="191"/>
    </location>
</feature>
<sequence>MGRGRVEMKRIENKINRQVTFSKRRAGLLKKAHEISILCDAEVSLIVFSHKGKLFEYSSESCMEKVLERYERYSYAEKQLKAPDSHVNAQTNWSMEYSRLKAKIELLERNQRHYLGEDLESISIKELQNLEQQLDTSLKHIRSRKNQLMHESLNHLQRKEKEILEENSMLTKQIKERESILRTHQNQSEQQNRSHHVAPQPQPQLNPYMISHQASPFLSMGGMYQGEDPTAVRRNRLDLTLEPIYNCNLGYFAA</sequence>
<evidence type="ECO:0000250" key="1"/>
<evidence type="ECO:0000255" key="2">
    <source>
        <dbReference type="PROSITE-ProRule" id="PRU00251"/>
    </source>
</evidence>
<evidence type="ECO:0000255" key="3">
    <source>
        <dbReference type="PROSITE-ProRule" id="PRU00629"/>
    </source>
</evidence>
<evidence type="ECO:0000256" key="4">
    <source>
        <dbReference type="SAM" id="MobiDB-lite"/>
    </source>
</evidence>
<evidence type="ECO:0000269" key="5">
    <source>
    </source>
</evidence>
<accession>Q9SBK9</accession>
<organism>
    <name type="scientific">Brassica rapa subsp. pekinensis</name>
    <name type="common">Chinese cabbage</name>
    <name type="synonym">Brassica pekinensis</name>
    <dbReference type="NCBI Taxonomy" id="51351"/>
    <lineage>
        <taxon>Eukaryota</taxon>
        <taxon>Viridiplantae</taxon>
        <taxon>Streptophyta</taxon>
        <taxon>Embryophyta</taxon>
        <taxon>Tracheophyta</taxon>
        <taxon>Spermatophyta</taxon>
        <taxon>Magnoliopsida</taxon>
        <taxon>eudicotyledons</taxon>
        <taxon>Gunneridae</taxon>
        <taxon>Pentapetalae</taxon>
        <taxon>rosids</taxon>
        <taxon>malvids</taxon>
        <taxon>Brassicales</taxon>
        <taxon>Brassicaceae</taxon>
        <taxon>Brassiceae</taxon>
        <taxon>Brassica</taxon>
    </lineage>
</organism>
<proteinExistence type="evidence at transcript level"/>
<name>CAL_BRARP</name>